<feature type="chain" id="PRO_0000079287" description="Transcription factor CPH1">
    <location>
        <begin position="1"/>
        <end position="656"/>
    </location>
</feature>
<feature type="DNA-binding region" evidence="1">
    <location>
        <begin position="44"/>
        <end position="154"/>
    </location>
</feature>
<feature type="region of interest" description="Disordered" evidence="2">
    <location>
        <begin position="205"/>
        <end position="289"/>
    </location>
</feature>
<feature type="region of interest" description="Disordered" evidence="2">
    <location>
        <begin position="575"/>
        <end position="656"/>
    </location>
</feature>
<feature type="compositionally biased region" description="Low complexity" evidence="2">
    <location>
        <begin position="205"/>
        <end position="242"/>
    </location>
</feature>
<feature type="compositionally biased region" description="Polar residues" evidence="2">
    <location>
        <begin position="243"/>
        <end position="267"/>
    </location>
</feature>
<feature type="compositionally biased region" description="Low complexity" evidence="2">
    <location>
        <begin position="575"/>
        <end position="586"/>
    </location>
</feature>
<feature type="compositionally biased region" description="Low complexity" evidence="2">
    <location>
        <begin position="600"/>
        <end position="609"/>
    </location>
</feature>
<feature type="compositionally biased region" description="Polar residues" evidence="2">
    <location>
        <begin position="628"/>
        <end position="642"/>
    </location>
</feature>
<feature type="compositionally biased region" description="Basic and acidic residues" evidence="2">
    <location>
        <begin position="646"/>
        <end position="656"/>
    </location>
</feature>
<feature type="sequence variant" description="In strain: 1006.">
    <original>I</original>
    <variation>M</variation>
    <location>
        <position position="482"/>
    </location>
</feature>
<feature type="sequence conflict" description="In Ref. 1; AAA59355." evidence="3" ref="1">
    <original>N</original>
    <variation>K</variation>
    <location>
        <position position="610"/>
    </location>
</feature>
<comment type="function">
    <text>Transcription factor involved in the formation of pseudohyphae and hyphae. It is likely to play a role in the developmental switch between yeast and mycelial forms. May be involved in a signal transduction system, strengthening the possibility of a sexual phase up to now undetected, and similar to that of the yeast mating pathway.</text>
</comment>
<comment type="subcellular location">
    <subcellularLocation>
        <location>Nucleus</location>
    </subcellularLocation>
</comment>
<comment type="similarity">
    <text evidence="3">Belongs to the STE12 transcription factor family.</text>
</comment>
<comment type="sequence caution" evidence="3">
    <conflict type="erroneous termination">
        <sequence resource="EMBL-CDS" id="AAA59355"/>
    </conflict>
    <text>Extended C-terminus.</text>
</comment>
<sequence>MSITKTYNGDPTSLVPTQSVKESLRLIEDLKFFLATAPANWQENQVIRRYYLNHDEGFVSCVYWNNLYFITGTDIVRCIVYKFEHFGRKIIDRKKFEEGIFSDLRNLKCGADAILEPPRSEFLEFLFKNSCLRTQKKQKVFFWFNVPHDKLMADALERDLKKEKMGQRPTTMAHREPALSFHYDESSSLYTQLGKHMETQKRINDAATSSTSNTATTLTDTGVSSGLNNTTSGGGSDSATSTHNNNEASTKPSNGSEKSSPEYTTTARGRDEFGFLNEATPSQYKANSDYEDDFPLDYINQTTQNSEDYITLDANYQAGSYANMIEDNYDSFLDATLFIPPSLGVPTGTAATATTSNQVAFNDEYLIEQAQPIRTPLPPISSSTISGLLQPKSAAKFFSLQSANGGEEFFPAYQNDPSTANAGFVPPISAKYATQFATRQVATPTYIKAIPQTGAAAATGNGGQPQQYYDQATGNAFYPAEIPVSYNVVHPESEYWTNNSGAVATTAAATAPMYDASGFPIPINQSYMVMNEHEMVPYQYMNSNGAMIGMIPPHQQQQQQQQQIAMGYQSMLRQQQQQQQQQQQQQPSSTMTKKKKQIHSFNNNKSLSSNGGGITKKSHDNNNHSKVKTSYGSLNDVVNSKVTKVINKEEVKQSQT</sequence>
<gene>
    <name type="primary">CPH1</name>
    <name type="synonym">ACPR</name>
    <name type="ordered locus">CAALFM_C107370CA</name>
    <name type="ORF">CaO19.11912</name>
    <name type="ORF">CaO19.4433</name>
</gene>
<organism>
    <name type="scientific">Candida albicans (strain SC5314 / ATCC MYA-2876)</name>
    <name type="common">Yeast</name>
    <dbReference type="NCBI Taxonomy" id="237561"/>
    <lineage>
        <taxon>Eukaryota</taxon>
        <taxon>Fungi</taxon>
        <taxon>Dikarya</taxon>
        <taxon>Ascomycota</taxon>
        <taxon>Saccharomycotina</taxon>
        <taxon>Pichiomycetes</taxon>
        <taxon>Debaryomycetaceae</taxon>
        <taxon>Candida/Lodderomyces clade</taxon>
        <taxon>Candida</taxon>
    </lineage>
</organism>
<accession>P43079</accession>
<accession>A0A1D8PE14</accession>
<accession>Q59WD6</accession>
<accession>Q59WZ4</accession>
<reference key="1">
    <citation type="journal article" date="1994" name="J. Biol. Chem.">
        <title>Identification of a putative transcription factor in Candida albicans that can complement the mating defect of Saccharomyces cerevisiae ste12 mutants.</title>
        <authorList>
            <person name="Malathi K."/>
            <person name="Ganesan K."/>
            <person name="Datta A."/>
        </authorList>
    </citation>
    <scope>NUCLEOTIDE SEQUENCE [GENOMIC DNA]</scope>
    <source>
        <strain>SC5314 / ATCC MYA-2876</strain>
    </source>
</reference>
<reference key="2">
    <citation type="journal article" date="1994" name="Science">
        <title>Suppression of hyphal formation in Candida albicans by mutation of a STE12 homolog.</title>
        <authorList>
            <person name="Liu H."/>
            <person name="Koehler J."/>
            <person name="Fink G.R."/>
        </authorList>
    </citation>
    <scope>NUCLEOTIDE SEQUENCE [GENOMIC DNA]</scope>
    <source>
        <strain>1006</strain>
    </source>
</reference>
<reference key="3">
    <citation type="journal article" date="1994" name="Science">
        <authorList>
            <person name="Liu H."/>
            <person name="Koehler J."/>
            <person name="Fink G.R."/>
        </authorList>
    </citation>
    <scope>ERRATUM OF PUBMED:7992058</scope>
</reference>
<reference key="4">
    <citation type="journal article" date="2007" name="Genome Biol.">
        <title>Assembly of the Candida albicans genome into sixteen supercontigs aligned on the eight chromosomes.</title>
        <authorList>
            <person name="van het Hoog M."/>
            <person name="Rast T.J."/>
            <person name="Martchenko M."/>
            <person name="Grindle S."/>
            <person name="Dignard D."/>
            <person name="Hogues H."/>
            <person name="Cuomo C."/>
            <person name="Berriman M."/>
            <person name="Scherer S."/>
            <person name="Magee B.B."/>
            <person name="Whiteway M."/>
            <person name="Chibana H."/>
            <person name="Nantel A."/>
            <person name="Magee P.T."/>
        </authorList>
    </citation>
    <scope>GENOME REANNOTATION</scope>
    <source>
        <strain>SC5314 / ATCC MYA-2876</strain>
    </source>
</reference>
<reference key="5">
    <citation type="journal article" date="2013" name="Genome Biol.">
        <title>Assembly of a phased diploid Candida albicans genome facilitates allele-specific measurements and provides a simple model for repeat and indel structure.</title>
        <authorList>
            <person name="Muzzey D."/>
            <person name="Schwartz K."/>
            <person name="Weissman J.S."/>
            <person name="Sherlock G."/>
        </authorList>
    </citation>
    <scope>NUCLEOTIDE SEQUENCE [LARGE SCALE GENOMIC DNA]</scope>
    <scope>GENOME REANNOTATION</scope>
    <source>
        <strain>SC5314 / ATCC MYA-2876</strain>
    </source>
</reference>
<reference key="6">
    <citation type="journal article" date="2004" name="Proc. Natl. Acad. Sci. U.S.A.">
        <title>The diploid genome sequence of Candida albicans.</title>
        <authorList>
            <person name="Jones T."/>
            <person name="Federspiel N.A."/>
            <person name="Chibana H."/>
            <person name="Dungan J."/>
            <person name="Kalman S."/>
            <person name="Magee B.B."/>
            <person name="Newport G."/>
            <person name="Thorstenson Y.R."/>
            <person name="Agabian N."/>
            <person name="Magee P.T."/>
            <person name="Davis R.W."/>
            <person name="Scherer S."/>
        </authorList>
    </citation>
    <scope>NUCLEOTIDE SEQUENCE [LARGE SCALE GENOMIC DNA]</scope>
    <source>
        <strain>SC5314 / ATCC MYA-2876</strain>
    </source>
</reference>
<reference key="7">
    <citation type="journal article" date="1994" name="Biochem. Biophys. Res. Commun.">
        <title>ACPR, a STE12 homologue from Candida albicans, is a strong inducer of pseudohyphae in Saccharomyces cerevisiae haploids and diploids.</title>
        <authorList>
            <person name="Singh P."/>
            <person name="Ganesan K."/>
            <person name="Malathi K."/>
            <person name="Ghosh D."/>
            <person name="Datta A."/>
        </authorList>
    </citation>
    <scope>CHARACTERIZATION</scope>
</reference>
<protein>
    <recommendedName>
        <fullName>Transcription factor CPH1</fullName>
    </recommendedName>
</protein>
<proteinExistence type="evidence at protein level"/>
<keyword id="KW-0010">Activator</keyword>
<keyword id="KW-0238">DNA-binding</keyword>
<keyword id="KW-0539">Nucleus</keyword>
<keyword id="KW-1185">Reference proteome</keyword>
<keyword id="KW-0804">Transcription</keyword>
<keyword id="KW-0805">Transcription regulation</keyword>
<name>CPH1_CANAL</name>
<evidence type="ECO:0000250" key="1"/>
<evidence type="ECO:0000256" key="2">
    <source>
        <dbReference type="SAM" id="MobiDB-lite"/>
    </source>
</evidence>
<evidence type="ECO:0000305" key="3"/>
<dbReference type="EMBL" id="L16451">
    <property type="protein sequence ID" value="AAA59355.1"/>
    <property type="status" value="ALT_TERM"/>
    <property type="molecule type" value="Genomic_DNA"/>
</dbReference>
<dbReference type="EMBL" id="U15152">
    <property type="protein sequence ID" value="AAA64692.1"/>
    <property type="molecule type" value="Genomic_DNA"/>
</dbReference>
<dbReference type="EMBL" id="CP017623">
    <property type="protein sequence ID" value="AOW26385.1"/>
    <property type="molecule type" value="Genomic_DNA"/>
</dbReference>
<dbReference type="PIR" id="A54767">
    <property type="entry name" value="A54767"/>
</dbReference>
<dbReference type="RefSeq" id="XP_713877.1">
    <property type="nucleotide sequence ID" value="XM_708784.2"/>
</dbReference>
<dbReference type="BioGRID" id="1227359">
    <property type="interactions" value="3"/>
</dbReference>
<dbReference type="STRING" id="237561.P43079"/>
<dbReference type="EnsemblFungi" id="C1_07370C_A-T">
    <property type="protein sequence ID" value="C1_07370C_A-T-p1"/>
    <property type="gene ID" value="C1_07370C_A"/>
</dbReference>
<dbReference type="GeneID" id="3644468"/>
<dbReference type="KEGG" id="cal:CAALFM_C107370CA"/>
<dbReference type="CGD" id="CAL0000198463">
    <property type="gene designation" value="CPH1"/>
</dbReference>
<dbReference type="VEuPathDB" id="FungiDB:C1_07370C_A"/>
<dbReference type="eggNOG" id="ENOG502QTVR">
    <property type="taxonomic scope" value="Eukaryota"/>
</dbReference>
<dbReference type="HOGENOM" id="CLU_019798_1_0_1"/>
<dbReference type="InParanoid" id="P43079"/>
<dbReference type="OrthoDB" id="1095242at2759"/>
<dbReference type="PHI-base" id="PHI:10232"/>
<dbReference type="PHI-base" id="PHI:10318"/>
<dbReference type="PHI-base" id="PHI:11640"/>
<dbReference type="PHI-base" id="PHI:123273"/>
<dbReference type="PHI-base" id="PHI:3504"/>
<dbReference type="PHI-base" id="PHI:6802"/>
<dbReference type="PHI-base" id="PHI:6804"/>
<dbReference type="PHI-base" id="PHI:86"/>
<dbReference type="PRO" id="PR:P43079"/>
<dbReference type="Proteomes" id="UP000000559">
    <property type="component" value="Chromosome 1"/>
</dbReference>
<dbReference type="GO" id="GO:0005634">
    <property type="term" value="C:nucleus"/>
    <property type="evidence" value="ECO:0000318"/>
    <property type="project" value="GO_Central"/>
</dbReference>
<dbReference type="GO" id="GO:1990526">
    <property type="term" value="C:Ste12p-Dig1p-Dig2p complex"/>
    <property type="evidence" value="ECO:0000318"/>
    <property type="project" value="GO_Central"/>
</dbReference>
<dbReference type="GO" id="GO:1990527">
    <property type="term" value="C:Tec1p-Ste12p-Dig1p complex"/>
    <property type="evidence" value="ECO:0000318"/>
    <property type="project" value="GO_Central"/>
</dbReference>
<dbReference type="GO" id="GO:0003677">
    <property type="term" value="F:DNA binding"/>
    <property type="evidence" value="ECO:0000314"/>
    <property type="project" value="CGD"/>
</dbReference>
<dbReference type="GO" id="GO:0003700">
    <property type="term" value="F:DNA-binding transcription factor activity"/>
    <property type="evidence" value="ECO:0000316"/>
    <property type="project" value="CGD"/>
</dbReference>
<dbReference type="GO" id="GO:0031670">
    <property type="term" value="P:cellular response to nutrient"/>
    <property type="evidence" value="ECO:0000315"/>
    <property type="project" value="CGD"/>
</dbReference>
<dbReference type="GO" id="GO:0009267">
    <property type="term" value="P:cellular response to starvation"/>
    <property type="evidence" value="ECO:0000315"/>
    <property type="project" value="CGD"/>
</dbReference>
<dbReference type="GO" id="GO:0044114">
    <property type="term" value="P:development of symbiont in host"/>
    <property type="evidence" value="ECO:0000315"/>
    <property type="project" value="CGD"/>
</dbReference>
<dbReference type="GO" id="GO:0030447">
    <property type="term" value="P:filamentous growth"/>
    <property type="evidence" value="ECO:0000315"/>
    <property type="project" value="CGD"/>
</dbReference>
<dbReference type="GO" id="GO:0044182">
    <property type="term" value="P:filamentous growth of a population of unicellular organisms"/>
    <property type="evidence" value="ECO:0000315"/>
    <property type="project" value="CGD"/>
</dbReference>
<dbReference type="GO" id="GO:0036180">
    <property type="term" value="P:filamentous growth of a population of unicellular organisms in response to biotic stimulus"/>
    <property type="evidence" value="ECO:0000315"/>
    <property type="project" value="CGD"/>
</dbReference>
<dbReference type="GO" id="GO:0036170">
    <property type="term" value="P:filamentous growth of a population of unicellular organisms in response to starvation"/>
    <property type="evidence" value="ECO:0000315"/>
    <property type="project" value="CGD"/>
</dbReference>
<dbReference type="GO" id="GO:0031505">
    <property type="term" value="P:fungal-type cell wall organization"/>
    <property type="evidence" value="ECO:0000315"/>
    <property type="project" value="CGD"/>
</dbReference>
<dbReference type="GO" id="GO:0006012">
    <property type="term" value="P:galactose metabolic process"/>
    <property type="evidence" value="ECO:0000315"/>
    <property type="project" value="CGD"/>
</dbReference>
<dbReference type="GO" id="GO:0007617">
    <property type="term" value="P:mating behavior"/>
    <property type="evidence" value="ECO:0000315"/>
    <property type="project" value="CGD"/>
</dbReference>
<dbReference type="GO" id="GO:1990277">
    <property type="term" value="P:parasexual reproduction with cellular fusion"/>
    <property type="evidence" value="ECO:0000315"/>
    <property type="project" value="CGD"/>
</dbReference>
<dbReference type="GO" id="GO:0036166">
    <property type="term" value="P:phenotypic switching"/>
    <property type="evidence" value="ECO:0000315"/>
    <property type="project" value="CGD"/>
</dbReference>
<dbReference type="GO" id="GO:1900430">
    <property type="term" value="P:positive regulation of filamentous growth of a population of unicellular organisms"/>
    <property type="evidence" value="ECO:0000315"/>
    <property type="project" value="CGD"/>
</dbReference>
<dbReference type="GO" id="GO:1900445">
    <property type="term" value="P:positive regulation of filamentous growth of a population of unicellular organisms in response to biotic stimulus"/>
    <property type="evidence" value="ECO:0000315"/>
    <property type="project" value="CGD"/>
</dbReference>
<dbReference type="GO" id="GO:1900436">
    <property type="term" value="P:positive regulation of filamentous growth of a population of unicellular organisms in response to starvation"/>
    <property type="evidence" value="ECO:0000315"/>
    <property type="project" value="CGD"/>
</dbReference>
<dbReference type="GO" id="GO:0007124">
    <property type="term" value="P:pseudohyphal growth"/>
    <property type="evidence" value="ECO:0000315"/>
    <property type="project" value="CGD"/>
</dbReference>
<dbReference type="GO" id="GO:0006355">
    <property type="term" value="P:regulation of DNA-templated transcription"/>
    <property type="evidence" value="ECO:0000315"/>
    <property type="project" value="CGD"/>
</dbReference>
<dbReference type="GO" id="GO:1900428">
    <property type="term" value="P:regulation of filamentous growth of a population of unicellular organisms"/>
    <property type="evidence" value="ECO:0000315"/>
    <property type="project" value="CGD"/>
</dbReference>
<dbReference type="GO" id="GO:2000220">
    <property type="term" value="P:regulation of pseudohyphal growth"/>
    <property type="evidence" value="ECO:0000318"/>
    <property type="project" value="GO_Central"/>
</dbReference>
<dbReference type="GO" id="GO:1900231">
    <property type="term" value="P:regulation of single-species biofilm formation on inanimate substrate"/>
    <property type="evidence" value="ECO:0000315"/>
    <property type="project" value="CGD"/>
</dbReference>
<dbReference type="GO" id="GO:0019953">
    <property type="term" value="P:sexual reproduction"/>
    <property type="evidence" value="ECO:0000318"/>
    <property type="project" value="GO_Central"/>
</dbReference>
<dbReference type="GO" id="GO:0042783">
    <property type="term" value="P:symbiont-mediated evasion of host immune response"/>
    <property type="evidence" value="ECO:0000315"/>
    <property type="project" value="CGD"/>
</dbReference>
<dbReference type="InterPro" id="IPR003120">
    <property type="entry name" value="Ste12"/>
</dbReference>
<dbReference type="InterPro" id="IPR052127">
    <property type="entry name" value="STE12_transcription_factor"/>
</dbReference>
<dbReference type="PANTHER" id="PTHR47427">
    <property type="entry name" value="PROTEIN STE12"/>
    <property type="match status" value="1"/>
</dbReference>
<dbReference type="PANTHER" id="PTHR47427:SF1">
    <property type="entry name" value="PROTEIN STE12"/>
    <property type="match status" value="1"/>
</dbReference>
<dbReference type="Pfam" id="PF02200">
    <property type="entry name" value="STE"/>
    <property type="match status" value="1"/>
</dbReference>
<dbReference type="SMART" id="SM00424">
    <property type="entry name" value="STE"/>
    <property type="match status" value="1"/>
</dbReference>